<feature type="chain" id="PRO_1000193232" description="Ribosome-binding factor A">
    <location>
        <begin position="1"/>
        <end position="118"/>
    </location>
</feature>
<sequence>MKLRANRVGEQMKKELGDIISRKIKDPRVGFVTVTDVQVSGDLQIATVYISVLGDEEQKESTLKGLAKAKGFIRSEIGQRIRLRKTPEISFEFDESIGYGHRIDTLLHEINKEGKREE</sequence>
<keyword id="KW-0963">Cytoplasm</keyword>
<keyword id="KW-0690">Ribosome biogenesis</keyword>
<organism>
    <name type="scientific">Bacillus cereus (strain Q1)</name>
    <dbReference type="NCBI Taxonomy" id="361100"/>
    <lineage>
        <taxon>Bacteria</taxon>
        <taxon>Bacillati</taxon>
        <taxon>Bacillota</taxon>
        <taxon>Bacilli</taxon>
        <taxon>Bacillales</taxon>
        <taxon>Bacillaceae</taxon>
        <taxon>Bacillus</taxon>
        <taxon>Bacillus cereus group</taxon>
    </lineage>
</organism>
<evidence type="ECO:0000255" key="1">
    <source>
        <dbReference type="HAMAP-Rule" id="MF_00003"/>
    </source>
</evidence>
<comment type="function">
    <text evidence="1">One of several proteins that assist in the late maturation steps of the functional core of the 30S ribosomal subunit. Associates with free 30S ribosomal subunits (but not with 30S subunits that are part of 70S ribosomes or polysomes). Required for efficient processing of 16S rRNA. May interact with the 5'-terminal helix region of 16S rRNA.</text>
</comment>
<comment type="subunit">
    <text evidence="1">Monomer. Binds 30S ribosomal subunits, but not 50S ribosomal subunits or 70S ribosomes.</text>
</comment>
<comment type="subcellular location">
    <subcellularLocation>
        <location evidence="1">Cytoplasm</location>
    </subcellularLocation>
</comment>
<comment type="similarity">
    <text evidence="1">Belongs to the RbfA family.</text>
</comment>
<name>RBFA_BACCQ</name>
<accession>B9IV99</accession>
<reference key="1">
    <citation type="journal article" date="2009" name="J. Bacteriol.">
        <title>Complete genome sequence of the extremophilic Bacillus cereus strain Q1 with industrial applications.</title>
        <authorList>
            <person name="Xiong Z."/>
            <person name="Jiang Y."/>
            <person name="Qi D."/>
            <person name="Lu H."/>
            <person name="Yang F."/>
            <person name="Yang J."/>
            <person name="Chen L."/>
            <person name="Sun L."/>
            <person name="Xu X."/>
            <person name="Xue Y."/>
            <person name="Zhu Y."/>
            <person name="Jin Q."/>
        </authorList>
    </citation>
    <scope>NUCLEOTIDE SEQUENCE [LARGE SCALE GENOMIC DNA]</scope>
    <source>
        <strain>Q1</strain>
    </source>
</reference>
<proteinExistence type="inferred from homology"/>
<gene>
    <name evidence="1" type="primary">rbfA</name>
    <name type="ordered locus">BCQ_3595</name>
</gene>
<protein>
    <recommendedName>
        <fullName evidence="1">Ribosome-binding factor A</fullName>
    </recommendedName>
</protein>
<dbReference type="EMBL" id="CP000227">
    <property type="protein sequence ID" value="ACM14023.1"/>
    <property type="molecule type" value="Genomic_DNA"/>
</dbReference>
<dbReference type="SMR" id="B9IV99"/>
<dbReference type="KEGG" id="bcq:BCQ_3595"/>
<dbReference type="HOGENOM" id="CLU_089475_6_3_9"/>
<dbReference type="Proteomes" id="UP000000441">
    <property type="component" value="Chromosome"/>
</dbReference>
<dbReference type="GO" id="GO:0005829">
    <property type="term" value="C:cytosol"/>
    <property type="evidence" value="ECO:0007669"/>
    <property type="project" value="TreeGrafter"/>
</dbReference>
<dbReference type="GO" id="GO:0043024">
    <property type="term" value="F:ribosomal small subunit binding"/>
    <property type="evidence" value="ECO:0007669"/>
    <property type="project" value="TreeGrafter"/>
</dbReference>
<dbReference type="GO" id="GO:0030490">
    <property type="term" value="P:maturation of SSU-rRNA"/>
    <property type="evidence" value="ECO:0007669"/>
    <property type="project" value="UniProtKB-UniRule"/>
</dbReference>
<dbReference type="FunFam" id="3.30.300.20:FF:000009">
    <property type="entry name" value="Ribosome-binding factor A"/>
    <property type="match status" value="1"/>
</dbReference>
<dbReference type="Gene3D" id="3.30.300.20">
    <property type="match status" value="1"/>
</dbReference>
<dbReference type="HAMAP" id="MF_00003">
    <property type="entry name" value="RbfA"/>
    <property type="match status" value="1"/>
</dbReference>
<dbReference type="InterPro" id="IPR015946">
    <property type="entry name" value="KH_dom-like_a/b"/>
</dbReference>
<dbReference type="InterPro" id="IPR000238">
    <property type="entry name" value="RbfA"/>
</dbReference>
<dbReference type="InterPro" id="IPR023799">
    <property type="entry name" value="RbfA_dom_sf"/>
</dbReference>
<dbReference type="InterPro" id="IPR020053">
    <property type="entry name" value="Ribosome-bd_factorA_CS"/>
</dbReference>
<dbReference type="NCBIfam" id="TIGR00082">
    <property type="entry name" value="rbfA"/>
    <property type="match status" value="1"/>
</dbReference>
<dbReference type="PANTHER" id="PTHR33515">
    <property type="entry name" value="RIBOSOME-BINDING FACTOR A, CHLOROPLASTIC-RELATED"/>
    <property type="match status" value="1"/>
</dbReference>
<dbReference type="PANTHER" id="PTHR33515:SF1">
    <property type="entry name" value="RIBOSOME-BINDING FACTOR A, CHLOROPLASTIC-RELATED"/>
    <property type="match status" value="1"/>
</dbReference>
<dbReference type="Pfam" id="PF02033">
    <property type="entry name" value="RBFA"/>
    <property type="match status" value="1"/>
</dbReference>
<dbReference type="SUPFAM" id="SSF89919">
    <property type="entry name" value="Ribosome-binding factor A, RbfA"/>
    <property type="match status" value="1"/>
</dbReference>
<dbReference type="PROSITE" id="PS01319">
    <property type="entry name" value="RBFA"/>
    <property type="match status" value="1"/>
</dbReference>